<feature type="chain" id="PRO_1000124214" description="Sulfur carrier protein FdhD">
    <location>
        <begin position="1"/>
        <end position="278"/>
    </location>
</feature>
<feature type="active site" description="Cysteine persulfide intermediate" evidence="1">
    <location>
        <position position="121"/>
    </location>
</feature>
<feature type="binding site" evidence="1">
    <location>
        <begin position="260"/>
        <end position="265"/>
    </location>
    <ligand>
        <name>Mo-bis(molybdopterin guanine dinucleotide)</name>
        <dbReference type="ChEBI" id="CHEBI:60539"/>
    </ligand>
</feature>
<dbReference type="EMBL" id="FM180568">
    <property type="protein sequence ID" value="CAS11746.1"/>
    <property type="molecule type" value="Genomic_DNA"/>
</dbReference>
<dbReference type="RefSeq" id="WP_000753590.1">
    <property type="nucleotide sequence ID" value="NC_011601.1"/>
</dbReference>
<dbReference type="SMR" id="B7UNL4"/>
<dbReference type="KEGG" id="ecg:E2348C_4198"/>
<dbReference type="HOGENOM" id="CLU_056887_2_0_6"/>
<dbReference type="Proteomes" id="UP000008205">
    <property type="component" value="Chromosome"/>
</dbReference>
<dbReference type="GO" id="GO:0005737">
    <property type="term" value="C:cytoplasm"/>
    <property type="evidence" value="ECO:0007669"/>
    <property type="project" value="UniProtKB-SubCell"/>
</dbReference>
<dbReference type="GO" id="GO:0097163">
    <property type="term" value="F:sulfur carrier activity"/>
    <property type="evidence" value="ECO:0007669"/>
    <property type="project" value="UniProtKB-UniRule"/>
</dbReference>
<dbReference type="GO" id="GO:0016783">
    <property type="term" value="F:sulfurtransferase activity"/>
    <property type="evidence" value="ECO:0007669"/>
    <property type="project" value="InterPro"/>
</dbReference>
<dbReference type="GO" id="GO:0006777">
    <property type="term" value="P:Mo-molybdopterin cofactor biosynthetic process"/>
    <property type="evidence" value="ECO:0007669"/>
    <property type="project" value="UniProtKB-UniRule"/>
</dbReference>
<dbReference type="FunFam" id="3.10.20.10:FF:000003">
    <property type="entry name" value="Sulfur carrier protein FdhD"/>
    <property type="match status" value="1"/>
</dbReference>
<dbReference type="FunFam" id="3.40.140.10:FF:000027">
    <property type="entry name" value="Sulfur carrier protein FdhD"/>
    <property type="match status" value="1"/>
</dbReference>
<dbReference type="Gene3D" id="3.10.20.10">
    <property type="match status" value="1"/>
</dbReference>
<dbReference type="Gene3D" id="3.40.140.10">
    <property type="entry name" value="Cytidine Deaminase, domain 2"/>
    <property type="match status" value="1"/>
</dbReference>
<dbReference type="HAMAP" id="MF_00187">
    <property type="entry name" value="FdhD"/>
    <property type="match status" value="1"/>
</dbReference>
<dbReference type="InterPro" id="IPR016193">
    <property type="entry name" value="Cytidine_deaminase-like"/>
</dbReference>
<dbReference type="InterPro" id="IPR003786">
    <property type="entry name" value="FdhD"/>
</dbReference>
<dbReference type="NCBIfam" id="TIGR00129">
    <property type="entry name" value="fdhD_narQ"/>
    <property type="match status" value="1"/>
</dbReference>
<dbReference type="PANTHER" id="PTHR30592">
    <property type="entry name" value="FORMATE DEHYDROGENASE"/>
    <property type="match status" value="1"/>
</dbReference>
<dbReference type="PANTHER" id="PTHR30592:SF1">
    <property type="entry name" value="SULFUR CARRIER PROTEIN FDHD"/>
    <property type="match status" value="1"/>
</dbReference>
<dbReference type="Pfam" id="PF02634">
    <property type="entry name" value="FdhD-NarQ"/>
    <property type="match status" value="1"/>
</dbReference>
<dbReference type="PIRSF" id="PIRSF015626">
    <property type="entry name" value="FdhD"/>
    <property type="match status" value="1"/>
</dbReference>
<dbReference type="SUPFAM" id="SSF53927">
    <property type="entry name" value="Cytidine deaminase-like"/>
    <property type="match status" value="1"/>
</dbReference>
<sequence>MKKTQQKEIENVTNITGVRQIELWRRDDLQHPRLDEVAEEVPVALVYNGISHVVMMASPKDLEYFALGFSLSEGIIESPRDIFGMDVVPSCNGLEVQIELSSRRFMGLKERRRALAGRTGCGVCGVEQLNDIGKPVQPLPFTQTFDLNKLDDALRHLNDFQPVGQLTGCTHAAAWMLPSGELVGGHEDVGRHVALDKLLGRRSQEGESWQQGAVLVSSRASYEMVQKSAMCGVEILFAVSAATTLAVEVAERCNLTLVGFCKPGRATVYTHPQRLVHN</sequence>
<protein>
    <recommendedName>
        <fullName evidence="1">Sulfur carrier protein FdhD</fullName>
    </recommendedName>
</protein>
<reference key="1">
    <citation type="journal article" date="2009" name="J. Bacteriol.">
        <title>Complete genome sequence and comparative genome analysis of enteropathogenic Escherichia coli O127:H6 strain E2348/69.</title>
        <authorList>
            <person name="Iguchi A."/>
            <person name="Thomson N.R."/>
            <person name="Ogura Y."/>
            <person name="Saunders D."/>
            <person name="Ooka T."/>
            <person name="Henderson I.R."/>
            <person name="Harris D."/>
            <person name="Asadulghani M."/>
            <person name="Kurokawa K."/>
            <person name="Dean P."/>
            <person name="Kenny B."/>
            <person name="Quail M.A."/>
            <person name="Thurston S."/>
            <person name="Dougan G."/>
            <person name="Hayashi T."/>
            <person name="Parkhill J."/>
            <person name="Frankel G."/>
        </authorList>
    </citation>
    <scope>NUCLEOTIDE SEQUENCE [LARGE SCALE GENOMIC DNA]</scope>
    <source>
        <strain>E2348/69 / EPEC</strain>
    </source>
</reference>
<gene>
    <name evidence="1" type="primary">fdhD</name>
    <name type="ordered locus">E2348C_4198</name>
</gene>
<keyword id="KW-0963">Cytoplasm</keyword>
<keyword id="KW-0501">Molybdenum cofactor biosynthesis</keyword>
<keyword id="KW-1185">Reference proteome</keyword>
<name>FDHD_ECO27</name>
<comment type="function">
    <text evidence="1">Required for formate dehydrogenase (FDH) activity. Acts as a sulfur carrier protein that transfers sulfur from IscS to the molybdenum cofactor prior to its insertion into FDH.</text>
</comment>
<comment type="subcellular location">
    <subcellularLocation>
        <location evidence="1">Cytoplasm</location>
    </subcellularLocation>
</comment>
<comment type="similarity">
    <text evidence="1">Belongs to the FdhD family.</text>
</comment>
<accession>B7UNL4</accession>
<proteinExistence type="inferred from homology"/>
<organism>
    <name type="scientific">Escherichia coli O127:H6 (strain E2348/69 / EPEC)</name>
    <dbReference type="NCBI Taxonomy" id="574521"/>
    <lineage>
        <taxon>Bacteria</taxon>
        <taxon>Pseudomonadati</taxon>
        <taxon>Pseudomonadota</taxon>
        <taxon>Gammaproteobacteria</taxon>
        <taxon>Enterobacterales</taxon>
        <taxon>Enterobacteriaceae</taxon>
        <taxon>Escherichia</taxon>
    </lineage>
</organism>
<evidence type="ECO:0000255" key="1">
    <source>
        <dbReference type="HAMAP-Rule" id="MF_00187"/>
    </source>
</evidence>